<accession>P30385</accession>
<organism>
    <name type="scientific">Gorilla gorilla gorilla</name>
    <name type="common">Western lowland gorilla</name>
    <dbReference type="NCBI Taxonomy" id="9595"/>
    <lineage>
        <taxon>Eukaryota</taxon>
        <taxon>Metazoa</taxon>
        <taxon>Chordata</taxon>
        <taxon>Craniata</taxon>
        <taxon>Vertebrata</taxon>
        <taxon>Euteleostomi</taxon>
        <taxon>Mammalia</taxon>
        <taxon>Eutheria</taxon>
        <taxon>Euarchontoglires</taxon>
        <taxon>Primates</taxon>
        <taxon>Haplorrhini</taxon>
        <taxon>Catarrhini</taxon>
        <taxon>Hominidae</taxon>
        <taxon>Gorilla</taxon>
    </lineage>
</organism>
<reference key="1">
    <citation type="journal article" date="1991" name="J. Exp. Med.">
        <title>Gorilla class I major histocompatibility complex alleles: comparison to human and chimpanzee class I.</title>
        <authorList>
            <person name="Lawlor D.A."/>
            <person name="Warren E."/>
            <person name="Taylor P."/>
            <person name="Parham P."/>
        </authorList>
    </citation>
    <scope>NUCLEOTIDE SEQUENCE [MRNA]</scope>
</reference>
<feature type="signal peptide" evidence="1">
    <location>
        <begin position="1"/>
        <end position="24"/>
    </location>
</feature>
<feature type="chain" id="PRO_0000018906" description="Class I histocompatibility antigen, Gogo-C*0201 alpha chain">
    <location>
        <begin position="25"/>
        <end position="366"/>
    </location>
</feature>
<feature type="topological domain" description="Extracellular" evidence="2">
    <location>
        <begin position="25"/>
        <end position="308"/>
    </location>
</feature>
<feature type="transmembrane region" description="Helical" evidence="2">
    <location>
        <begin position="309"/>
        <end position="333"/>
    </location>
</feature>
<feature type="topological domain" description="Cytoplasmic" evidence="2">
    <location>
        <begin position="334"/>
        <end position="366"/>
    </location>
</feature>
<feature type="domain" description="Ig-like C1-type">
    <location>
        <begin position="209"/>
        <end position="297"/>
    </location>
</feature>
<feature type="region of interest" description="Alpha-1">
    <location>
        <begin position="25"/>
        <end position="114"/>
    </location>
</feature>
<feature type="region of interest" description="Alpha-2">
    <location>
        <begin position="115"/>
        <end position="206"/>
    </location>
</feature>
<feature type="region of interest" description="Alpha-3">
    <location>
        <begin position="207"/>
        <end position="298"/>
    </location>
</feature>
<feature type="region of interest" description="Connecting peptide">
    <location>
        <begin position="299"/>
        <end position="308"/>
    </location>
</feature>
<feature type="glycosylation site" description="N-linked (GlcNAc...) asparagine" evidence="1">
    <location>
        <position position="110"/>
    </location>
</feature>
<feature type="disulfide bond" evidence="3">
    <location>
        <begin position="125"/>
        <end position="188"/>
    </location>
</feature>
<feature type="disulfide bond" evidence="3">
    <location>
        <begin position="227"/>
        <end position="283"/>
    </location>
</feature>
<comment type="function">
    <text>Involved in the presentation of foreign antigens to the immune system.</text>
</comment>
<comment type="subunit">
    <text>Heterodimer of an alpha chain and a beta chain (beta-2-microglobulin).</text>
</comment>
<comment type="subcellular location">
    <subcellularLocation>
        <location>Membrane</location>
        <topology>Single-pass type I membrane protein</topology>
    </subcellularLocation>
</comment>
<comment type="similarity">
    <text evidence="4">Belongs to the MHC class I family.</text>
</comment>
<keyword id="KW-1015">Disulfide bond</keyword>
<keyword id="KW-0325">Glycoprotein</keyword>
<keyword id="KW-0391">Immunity</keyword>
<keyword id="KW-0472">Membrane</keyword>
<keyword id="KW-0490">MHC I</keyword>
<keyword id="KW-1185">Reference proteome</keyword>
<keyword id="KW-0732">Signal</keyword>
<keyword id="KW-0812">Transmembrane</keyword>
<keyword id="KW-1133">Transmembrane helix</keyword>
<name>1C02_GORGO</name>
<protein>
    <recommendedName>
        <fullName>Class I histocompatibility antigen, Gogo-C*0201 alpha chain</fullName>
    </recommendedName>
</protein>
<evidence type="ECO:0000250" key="1"/>
<evidence type="ECO:0000255" key="2"/>
<evidence type="ECO:0000255" key="3">
    <source>
        <dbReference type="PROSITE-ProRule" id="PRU00114"/>
    </source>
</evidence>
<evidence type="ECO:0000305" key="4"/>
<proteinExistence type="evidence at transcript level"/>
<sequence length="366" mass="40954">MRVMAPRTLILPLSGALALTETWAGSHSMRYFYTSVSRPGRGEPRFISVGYVDDTQFVRFDSDAASPRGEPRAPWVEQEGPEYWDRETQKYKRQAQTDRVNLRKLRGYYNQSEDGSHTLQSMYGCDLGPDGRLLRGYSQFAYDGKDYIALNEDLRSWTAADTAAQVTQRKWEAARVAEQERAYLEGLCVEWLRRYLENGKETLQRAEPPKTHVTHHPLSDHEATLRCWALGFYPAEITLTWQRDGEDQTQDTELVETRPAGDGTFQKWAAVVVPSGQEQRYTCHMQHEGLPEPLTLRWEPSSQPTIPIVGIVVGLAVLVVLAVLGAVVTAMMCRRKSSGGKGGSCSQAACSNSAQGSDESLITCKA</sequence>
<dbReference type="EMBL" id="X60251">
    <property type="protein sequence ID" value="CAA42803.1"/>
    <property type="molecule type" value="mRNA"/>
</dbReference>
<dbReference type="PIR" id="JH0545">
    <property type="entry name" value="JH0545"/>
</dbReference>
<dbReference type="SMR" id="P30385"/>
<dbReference type="FunCoup" id="P30385">
    <property type="interactions" value="1522"/>
</dbReference>
<dbReference type="InParanoid" id="P30385"/>
<dbReference type="Proteomes" id="UP000001519">
    <property type="component" value="Unplaced"/>
</dbReference>
<dbReference type="GO" id="GO:0031901">
    <property type="term" value="C:early endosome membrane"/>
    <property type="evidence" value="ECO:0007669"/>
    <property type="project" value="UniProtKB-ARBA"/>
</dbReference>
<dbReference type="GO" id="GO:0012507">
    <property type="term" value="C:ER to Golgi transport vesicle membrane"/>
    <property type="evidence" value="ECO:0007669"/>
    <property type="project" value="UniProtKB-ARBA"/>
</dbReference>
<dbReference type="GO" id="GO:0009897">
    <property type="term" value="C:external side of plasma membrane"/>
    <property type="evidence" value="ECO:0000318"/>
    <property type="project" value="GO_Central"/>
</dbReference>
<dbReference type="GO" id="GO:0005615">
    <property type="term" value="C:extracellular space"/>
    <property type="evidence" value="ECO:0000318"/>
    <property type="project" value="GO_Central"/>
</dbReference>
<dbReference type="GO" id="GO:0098553">
    <property type="term" value="C:lumenal side of endoplasmic reticulum membrane"/>
    <property type="evidence" value="ECO:0007669"/>
    <property type="project" value="UniProtKB-ARBA"/>
</dbReference>
<dbReference type="GO" id="GO:0042612">
    <property type="term" value="C:MHC class I protein complex"/>
    <property type="evidence" value="ECO:0007669"/>
    <property type="project" value="UniProtKB-KW"/>
</dbReference>
<dbReference type="GO" id="GO:0030670">
    <property type="term" value="C:phagocytic vesicle membrane"/>
    <property type="evidence" value="ECO:0007669"/>
    <property type="project" value="UniProtKB-ARBA"/>
</dbReference>
<dbReference type="GO" id="GO:0055038">
    <property type="term" value="C:recycling endosome membrane"/>
    <property type="evidence" value="ECO:0007669"/>
    <property type="project" value="UniProtKB-ARBA"/>
</dbReference>
<dbReference type="GO" id="GO:0042605">
    <property type="term" value="F:peptide antigen binding"/>
    <property type="evidence" value="ECO:0000318"/>
    <property type="project" value="GO_Central"/>
</dbReference>
<dbReference type="GO" id="GO:0005102">
    <property type="term" value="F:signaling receptor binding"/>
    <property type="evidence" value="ECO:0000318"/>
    <property type="project" value="GO_Central"/>
</dbReference>
<dbReference type="GO" id="GO:0002486">
    <property type="term" value="P:antigen processing and presentation of endogenous peptide antigen via MHC class I via ER pathway, TAP-independent"/>
    <property type="evidence" value="ECO:0000318"/>
    <property type="project" value="GO_Central"/>
</dbReference>
<dbReference type="GO" id="GO:0002476">
    <property type="term" value="P:antigen processing and presentation of endogenous peptide antigen via MHC class Ib"/>
    <property type="evidence" value="ECO:0000318"/>
    <property type="project" value="GO_Central"/>
</dbReference>
<dbReference type="GO" id="GO:0006955">
    <property type="term" value="P:immune response"/>
    <property type="evidence" value="ECO:0000318"/>
    <property type="project" value="GO_Central"/>
</dbReference>
<dbReference type="GO" id="GO:0001916">
    <property type="term" value="P:positive regulation of T cell mediated cytotoxicity"/>
    <property type="evidence" value="ECO:0000318"/>
    <property type="project" value="GO_Central"/>
</dbReference>
<dbReference type="FunFam" id="2.60.40.10:FF:000014">
    <property type="entry name" value="H-2 class I histocompatibility antigen, alpha chain"/>
    <property type="match status" value="1"/>
</dbReference>
<dbReference type="FunFam" id="3.30.500.10:FF:000001">
    <property type="entry name" value="H-2 class I histocompatibility antigen, alpha chain"/>
    <property type="match status" value="1"/>
</dbReference>
<dbReference type="Gene3D" id="2.60.40.10">
    <property type="entry name" value="Immunoglobulins"/>
    <property type="match status" value="1"/>
</dbReference>
<dbReference type="Gene3D" id="3.30.500.10">
    <property type="entry name" value="MHC class I-like antigen recognition-like"/>
    <property type="match status" value="1"/>
</dbReference>
<dbReference type="InterPro" id="IPR007110">
    <property type="entry name" value="Ig-like_dom"/>
</dbReference>
<dbReference type="InterPro" id="IPR036179">
    <property type="entry name" value="Ig-like_dom_sf"/>
</dbReference>
<dbReference type="InterPro" id="IPR013783">
    <property type="entry name" value="Ig-like_fold"/>
</dbReference>
<dbReference type="InterPro" id="IPR003597">
    <property type="entry name" value="Ig_C1-set"/>
</dbReference>
<dbReference type="InterPro" id="IPR050208">
    <property type="entry name" value="MHC_class-I_related"/>
</dbReference>
<dbReference type="InterPro" id="IPR011161">
    <property type="entry name" value="MHC_I-like_Ag-recog"/>
</dbReference>
<dbReference type="InterPro" id="IPR037055">
    <property type="entry name" value="MHC_I-like_Ag-recog_sf"/>
</dbReference>
<dbReference type="InterPro" id="IPR011162">
    <property type="entry name" value="MHC_I/II-like_Ag-recog"/>
</dbReference>
<dbReference type="InterPro" id="IPR001039">
    <property type="entry name" value="MHC_I_a_a1/a2"/>
</dbReference>
<dbReference type="InterPro" id="IPR010579">
    <property type="entry name" value="MHC_I_a_C"/>
</dbReference>
<dbReference type="PANTHER" id="PTHR16675:SF251">
    <property type="entry name" value="HLA CLASS I HISTOCOMPATIBILITY ANTIGEN, C ALPHA CHAIN"/>
    <property type="match status" value="1"/>
</dbReference>
<dbReference type="PANTHER" id="PTHR16675">
    <property type="entry name" value="MHC CLASS I-RELATED"/>
    <property type="match status" value="1"/>
</dbReference>
<dbReference type="Pfam" id="PF07654">
    <property type="entry name" value="C1-set"/>
    <property type="match status" value="1"/>
</dbReference>
<dbReference type="Pfam" id="PF00129">
    <property type="entry name" value="MHC_I"/>
    <property type="match status" value="1"/>
</dbReference>
<dbReference type="Pfam" id="PF06623">
    <property type="entry name" value="MHC_I_C"/>
    <property type="match status" value="1"/>
</dbReference>
<dbReference type="PRINTS" id="PR01638">
    <property type="entry name" value="MHCCLASSI"/>
</dbReference>
<dbReference type="SMART" id="SM00407">
    <property type="entry name" value="IGc1"/>
    <property type="match status" value="1"/>
</dbReference>
<dbReference type="SUPFAM" id="SSF48726">
    <property type="entry name" value="Immunoglobulin"/>
    <property type="match status" value="1"/>
</dbReference>
<dbReference type="SUPFAM" id="SSF54452">
    <property type="entry name" value="MHC antigen-recognition domain"/>
    <property type="match status" value="1"/>
</dbReference>
<dbReference type="PROSITE" id="PS50835">
    <property type="entry name" value="IG_LIKE"/>
    <property type="match status" value="1"/>
</dbReference>